<feature type="chain" id="PRO_0000309202" description="Zinc metalloproteinase R519">
    <location>
        <begin position="1"/>
        <end position="615"/>
    </location>
</feature>
<feature type="domain" description="Peptidase M13" evidence="2">
    <location>
        <begin position="1"/>
        <end position="611"/>
    </location>
</feature>
<feature type="active site" evidence="2 3">
    <location>
        <position position="455"/>
    </location>
</feature>
<feature type="active site" description="Proton donor" evidence="2">
    <location>
        <position position="517"/>
    </location>
</feature>
<feature type="binding site" evidence="2 3">
    <location>
        <position position="454"/>
    </location>
    <ligand>
        <name>Zn(2+)</name>
        <dbReference type="ChEBI" id="CHEBI:29105"/>
        <note>catalytic</note>
    </ligand>
</feature>
<feature type="binding site" evidence="2 3">
    <location>
        <position position="458"/>
    </location>
    <ligand>
        <name>Zn(2+)</name>
        <dbReference type="ChEBI" id="CHEBI:29105"/>
        <note>catalytic</note>
    </ligand>
</feature>
<feature type="binding site" evidence="2">
    <location>
        <position position="513"/>
    </location>
    <ligand>
        <name>Zn(2+)</name>
        <dbReference type="ChEBI" id="CHEBI:29105"/>
        <note>catalytic</note>
    </ligand>
</feature>
<feature type="mutagenesis site" description="Reduced metalloprotease activity." evidence="4">
    <original>H</original>
    <variation>A</variation>
    <location>
        <position position="454"/>
    </location>
</feature>
<keyword id="KW-0378">Hydrolase</keyword>
<keyword id="KW-0479">Metal-binding</keyword>
<keyword id="KW-0482">Metalloprotease</keyword>
<keyword id="KW-0645">Protease</keyword>
<keyword id="KW-1185">Reference proteome</keyword>
<keyword id="KW-0862">Zinc</keyword>
<dbReference type="EC" id="3.4.24.-" evidence="4"/>
<dbReference type="EMBL" id="AY653733">
    <property type="protein sequence ID" value="AAV50783.1"/>
    <property type="molecule type" value="Genomic_DNA"/>
</dbReference>
<dbReference type="SMR" id="Q5UQ76"/>
<dbReference type="KEGG" id="vg:9925152"/>
<dbReference type="OrthoDB" id="36309at10239"/>
<dbReference type="Proteomes" id="UP000001134">
    <property type="component" value="Genome"/>
</dbReference>
<dbReference type="GO" id="GO:0005886">
    <property type="term" value="C:plasma membrane"/>
    <property type="evidence" value="ECO:0007669"/>
    <property type="project" value="TreeGrafter"/>
</dbReference>
<dbReference type="GO" id="GO:0046872">
    <property type="term" value="F:metal ion binding"/>
    <property type="evidence" value="ECO:0007669"/>
    <property type="project" value="UniProtKB-KW"/>
</dbReference>
<dbReference type="GO" id="GO:0004222">
    <property type="term" value="F:metalloendopeptidase activity"/>
    <property type="evidence" value="ECO:0007669"/>
    <property type="project" value="InterPro"/>
</dbReference>
<dbReference type="GO" id="GO:0008237">
    <property type="term" value="F:metallopeptidase activity"/>
    <property type="evidence" value="ECO:0000314"/>
    <property type="project" value="UniProtKB"/>
</dbReference>
<dbReference type="GO" id="GO:0016485">
    <property type="term" value="P:protein processing"/>
    <property type="evidence" value="ECO:0007669"/>
    <property type="project" value="TreeGrafter"/>
</dbReference>
<dbReference type="Gene3D" id="3.40.390.10">
    <property type="entry name" value="Collagenase (Catalytic Domain)"/>
    <property type="match status" value="1"/>
</dbReference>
<dbReference type="Gene3D" id="1.10.1380.10">
    <property type="entry name" value="Neutral endopeptidase , domain2"/>
    <property type="match status" value="1"/>
</dbReference>
<dbReference type="InterPro" id="IPR024079">
    <property type="entry name" value="MetalloPept_cat_dom_sf"/>
</dbReference>
<dbReference type="InterPro" id="IPR000718">
    <property type="entry name" value="Peptidase_M13"/>
</dbReference>
<dbReference type="InterPro" id="IPR018497">
    <property type="entry name" value="Peptidase_M13_C"/>
</dbReference>
<dbReference type="InterPro" id="IPR042089">
    <property type="entry name" value="Peptidase_M13_dom_2"/>
</dbReference>
<dbReference type="InterPro" id="IPR008753">
    <property type="entry name" value="Peptidase_M13_N"/>
</dbReference>
<dbReference type="PANTHER" id="PTHR11733:SF237">
    <property type="entry name" value="NEPRILYSIN-LIKE 4"/>
    <property type="match status" value="1"/>
</dbReference>
<dbReference type="PANTHER" id="PTHR11733">
    <property type="entry name" value="ZINC METALLOPROTEASE FAMILY M13 NEPRILYSIN-RELATED"/>
    <property type="match status" value="1"/>
</dbReference>
<dbReference type="Pfam" id="PF01431">
    <property type="entry name" value="Peptidase_M13"/>
    <property type="match status" value="1"/>
</dbReference>
<dbReference type="Pfam" id="PF05649">
    <property type="entry name" value="Peptidase_M13_N"/>
    <property type="match status" value="1"/>
</dbReference>
<dbReference type="SUPFAM" id="SSF55486">
    <property type="entry name" value="Metalloproteases ('zincins'), catalytic domain"/>
    <property type="match status" value="1"/>
</dbReference>
<dbReference type="PROSITE" id="PS51885">
    <property type="entry name" value="NEPRILYSIN"/>
    <property type="match status" value="1"/>
</dbReference>
<dbReference type="PROSITE" id="PS00142">
    <property type="entry name" value="ZINC_PROTEASE"/>
    <property type="match status" value="1"/>
</dbReference>
<proteinExistence type="evidence at protein level"/>
<protein>
    <recommendedName>
        <fullName>Zinc metalloproteinase R519</fullName>
        <ecNumber evidence="4">3.4.24.-</ecNumber>
    </recommendedName>
    <alternativeName>
        <fullName evidence="5">gp560</fullName>
    </alternativeName>
</protein>
<organismHost>
    <name type="scientific">Acanthamoeba polyphaga</name>
    <name type="common">Amoeba</name>
    <dbReference type="NCBI Taxonomy" id="5757"/>
</organismHost>
<name>PR519_MIMIV</name>
<evidence type="ECO:0000250" key="1"/>
<evidence type="ECO:0000255" key="2">
    <source>
        <dbReference type="PROSITE-ProRule" id="PRU01233"/>
    </source>
</evidence>
<evidence type="ECO:0000255" key="3">
    <source>
        <dbReference type="PROSITE-ProRule" id="PRU10095"/>
    </source>
</evidence>
<evidence type="ECO:0000269" key="4">
    <source>
    </source>
</evidence>
<evidence type="ECO:0000303" key="5">
    <source>
    </source>
</evidence>
<evidence type="ECO:0000305" key="6"/>
<gene>
    <name type="ordered locus">MIMI_R519</name>
</gene>
<comment type="function">
    <text evidence="4">Zinc metalloprotease.</text>
</comment>
<comment type="cofactor">
    <cofactor evidence="4">
        <name>Zn(2+)</name>
        <dbReference type="ChEBI" id="CHEBI:29105"/>
    </cofactor>
    <text evidence="1">Binds 1 zinc ion per subunit.</text>
</comment>
<comment type="induction">
    <text evidence="4">Expressed in the late phase of the viral replicative cycle (between 6 and 9 hpi).</text>
</comment>
<comment type="similarity">
    <text evidence="2 6">Belongs to the peptidase M13 family.</text>
</comment>
<sequence length="615" mass="73508">MTYRSCIPQNDLECYYNPNKTKYKSTNILSSIQHKIDKELTAYITDKTIDDTFGNRMIVFRDSFYDKPKNSKIFRQIIHMIETSNCWYSVKFLMDNGISSLFSLGITPHHTYPKKYYPMIISPILSLESKNDYQDYLALVRLKNFIGYSYDYITKYWNYKLSNKQNFINDVMEMESQLSLVTLTIEQQNNPFVIYNSLKWREFLEKYDVDNFWSSILGSYLKKEDYVIFDNIQYLSYLREYLKNTSKNSIKNYLVYSLVKKFGLYTDLLEFYNDIVIESINHDQIFLNMFSQYFGIYLETVFETRYHDKDKKEYITKMFYDMKLYLRNYFIECKFTDKTKREISLKIDNLHMVIGRQNYQYDLENFPLMGNDFYENVLNLERYYFHESIKLIGSTINKEWFSINGGMYSFEVNAYYDPICNVLYIPTSIINDMTISLERDDVYNYGSIGTILAHEIMHSLDNFGLQVNCDLSIGNKWDISDYKFYLSDLRKIIQHRIKLSNYDIASSIDALSEDISDTLGLKLSFKTYLSKFNKKIEPDNLSTNDKIHLQKFFYSWTETFKNINNNNQDDHSPSYIRINAPLAHLDEFYYLYGVESQHLNYLDPQLRSRILDKIN</sequence>
<reference key="1">
    <citation type="journal article" date="2004" name="Science">
        <title>The 1.2-megabase genome sequence of Mimivirus.</title>
        <authorList>
            <person name="Raoult D."/>
            <person name="Audic S."/>
            <person name="Robert C."/>
            <person name="Abergel C."/>
            <person name="Renesto P."/>
            <person name="Ogata H."/>
            <person name="La Scola B."/>
            <person name="Susan M."/>
            <person name="Claverie J.-M."/>
        </authorList>
    </citation>
    <scope>NUCLEOTIDE SEQUENCE [LARGE SCALE GENOMIC DNA]</scope>
    <source>
        <strain>Rowbotham-Bradford</strain>
    </source>
</reference>
<reference key="2">
    <citation type="journal article" date="2022" name="Microbiol. Spectr.">
        <title>Amoebal Tubulin Cleavage Late during Infection Is a Characteristic Feature of Mimivirus but Not of Marseillevirus.</title>
        <authorList>
            <person name="Goyal N."/>
            <person name="Barai A."/>
            <person name="Sen S."/>
            <person name="Kondabagil K."/>
        </authorList>
    </citation>
    <scope>INDUCTION</scope>
    <scope>COFACTOR</scope>
    <scope>CATALYTIC ACTIVITY</scope>
    <scope>FUNCTION</scope>
    <scope>MUTAGENESIS OF HIS-454</scope>
</reference>
<accession>Q5UQ76</accession>
<organism>
    <name type="scientific">Acanthamoeba polyphaga mimivirus</name>
    <name type="common">APMV</name>
    <dbReference type="NCBI Taxonomy" id="212035"/>
    <lineage>
        <taxon>Viruses</taxon>
        <taxon>Varidnaviria</taxon>
        <taxon>Bamfordvirae</taxon>
        <taxon>Nucleocytoviricota</taxon>
        <taxon>Megaviricetes</taxon>
        <taxon>Imitervirales</taxon>
        <taxon>Mimiviridae</taxon>
        <taxon>Megamimivirinae</taxon>
        <taxon>Mimivirus</taxon>
        <taxon>Mimivirus bradfordmassiliense</taxon>
    </lineage>
</organism>